<protein>
    <recommendedName>
        <fullName evidence="1">Large ribosomal subunit protein uL24</fullName>
    </recommendedName>
    <alternativeName>
        <fullName evidence="2">50S ribosomal protein L24</fullName>
    </alternativeName>
</protein>
<feature type="chain" id="PRO_0000241624" description="Large ribosomal subunit protein uL24">
    <location>
        <begin position="1"/>
        <end position="108"/>
    </location>
</feature>
<name>RL24_MYCMS</name>
<gene>
    <name evidence="1" type="primary">rplX</name>
    <name type="ordered locus">MSC_0734</name>
</gene>
<accession>Q6MSN6</accession>
<proteinExistence type="inferred from homology"/>
<reference key="1">
    <citation type="journal article" date="2004" name="Genome Res.">
        <title>The genome sequence of Mycoplasma mycoides subsp. mycoides SC type strain PG1T, the causative agent of contagious bovine pleuropneumonia (CBPP).</title>
        <authorList>
            <person name="Westberg J."/>
            <person name="Persson A."/>
            <person name="Holmberg A."/>
            <person name="Goesmann A."/>
            <person name="Lundeberg J."/>
            <person name="Johansson K.-E."/>
            <person name="Pettersson B."/>
            <person name="Uhlen M."/>
        </authorList>
    </citation>
    <scope>NUCLEOTIDE SEQUENCE [LARGE SCALE GENOMIC DNA]</scope>
    <source>
        <strain>CCUG 32753 / NCTC 10114 / PG1</strain>
    </source>
</reference>
<comment type="function">
    <text evidence="1">One of two assembly initiator proteins, it binds directly to the 5'-end of the 23S rRNA, where it nucleates assembly of the 50S subunit.</text>
</comment>
<comment type="function">
    <text evidence="1">One of the proteins that surrounds the polypeptide exit tunnel on the outside of the subunit.</text>
</comment>
<comment type="subunit">
    <text evidence="1">Part of the 50S ribosomal subunit.</text>
</comment>
<comment type="similarity">
    <text evidence="1">Belongs to the universal ribosomal protein uL24 family.</text>
</comment>
<organism>
    <name type="scientific">Mycoplasma mycoides subsp. mycoides SC (strain CCUG 32753 / NCTC 10114 / PG1)</name>
    <dbReference type="NCBI Taxonomy" id="272632"/>
    <lineage>
        <taxon>Bacteria</taxon>
        <taxon>Bacillati</taxon>
        <taxon>Mycoplasmatota</taxon>
        <taxon>Mollicutes</taxon>
        <taxon>Mycoplasmataceae</taxon>
        <taxon>Mycoplasma</taxon>
    </lineage>
</organism>
<dbReference type="EMBL" id="BX293980">
    <property type="protein sequence ID" value="CAE77352.1"/>
    <property type="molecule type" value="Genomic_DNA"/>
</dbReference>
<dbReference type="RefSeq" id="NP_975710.1">
    <property type="nucleotide sequence ID" value="NC_005364.2"/>
</dbReference>
<dbReference type="RefSeq" id="WP_011166902.1">
    <property type="nucleotide sequence ID" value="NC_005364.2"/>
</dbReference>
<dbReference type="SMR" id="Q6MSN6"/>
<dbReference type="STRING" id="272632.MSC_0734"/>
<dbReference type="KEGG" id="mmy:MSC_0734"/>
<dbReference type="PATRIC" id="fig|272632.4.peg.791"/>
<dbReference type="eggNOG" id="COG0198">
    <property type="taxonomic scope" value="Bacteria"/>
</dbReference>
<dbReference type="HOGENOM" id="CLU_093315_2_2_14"/>
<dbReference type="Proteomes" id="UP000001016">
    <property type="component" value="Chromosome"/>
</dbReference>
<dbReference type="GO" id="GO:1990904">
    <property type="term" value="C:ribonucleoprotein complex"/>
    <property type="evidence" value="ECO:0007669"/>
    <property type="project" value="UniProtKB-KW"/>
</dbReference>
<dbReference type="GO" id="GO:0005840">
    <property type="term" value="C:ribosome"/>
    <property type="evidence" value="ECO:0007669"/>
    <property type="project" value="UniProtKB-KW"/>
</dbReference>
<dbReference type="GO" id="GO:0019843">
    <property type="term" value="F:rRNA binding"/>
    <property type="evidence" value="ECO:0007669"/>
    <property type="project" value="UniProtKB-UniRule"/>
</dbReference>
<dbReference type="GO" id="GO:0003735">
    <property type="term" value="F:structural constituent of ribosome"/>
    <property type="evidence" value="ECO:0007669"/>
    <property type="project" value="InterPro"/>
</dbReference>
<dbReference type="GO" id="GO:0006412">
    <property type="term" value="P:translation"/>
    <property type="evidence" value="ECO:0007669"/>
    <property type="project" value="UniProtKB-UniRule"/>
</dbReference>
<dbReference type="CDD" id="cd06089">
    <property type="entry name" value="KOW_RPL26"/>
    <property type="match status" value="1"/>
</dbReference>
<dbReference type="Gene3D" id="2.30.30.30">
    <property type="match status" value="1"/>
</dbReference>
<dbReference type="HAMAP" id="MF_01326_B">
    <property type="entry name" value="Ribosomal_uL24_B"/>
    <property type="match status" value="1"/>
</dbReference>
<dbReference type="InterPro" id="IPR005824">
    <property type="entry name" value="KOW"/>
</dbReference>
<dbReference type="InterPro" id="IPR014722">
    <property type="entry name" value="Rib_uL2_dom2"/>
</dbReference>
<dbReference type="InterPro" id="IPR003256">
    <property type="entry name" value="Ribosomal_uL24"/>
</dbReference>
<dbReference type="InterPro" id="IPR005825">
    <property type="entry name" value="Ribosomal_uL24_CS"/>
</dbReference>
<dbReference type="InterPro" id="IPR041988">
    <property type="entry name" value="Ribosomal_uL24_KOW"/>
</dbReference>
<dbReference type="InterPro" id="IPR008991">
    <property type="entry name" value="Translation_prot_SH3-like_sf"/>
</dbReference>
<dbReference type="NCBIfam" id="TIGR01079">
    <property type="entry name" value="rplX_bact"/>
    <property type="match status" value="1"/>
</dbReference>
<dbReference type="PANTHER" id="PTHR12903">
    <property type="entry name" value="MITOCHONDRIAL RIBOSOMAL PROTEIN L24"/>
    <property type="match status" value="1"/>
</dbReference>
<dbReference type="Pfam" id="PF00467">
    <property type="entry name" value="KOW"/>
    <property type="match status" value="1"/>
</dbReference>
<dbReference type="Pfam" id="PF17136">
    <property type="entry name" value="ribosomal_L24"/>
    <property type="match status" value="1"/>
</dbReference>
<dbReference type="SMART" id="SM00739">
    <property type="entry name" value="KOW"/>
    <property type="match status" value="1"/>
</dbReference>
<dbReference type="SUPFAM" id="SSF50104">
    <property type="entry name" value="Translation proteins SH3-like domain"/>
    <property type="match status" value="1"/>
</dbReference>
<dbReference type="PROSITE" id="PS01108">
    <property type="entry name" value="RIBOSOMAL_L24"/>
    <property type="match status" value="1"/>
</dbReference>
<evidence type="ECO:0000255" key="1">
    <source>
        <dbReference type="HAMAP-Rule" id="MF_01326"/>
    </source>
</evidence>
<evidence type="ECO:0000305" key="2"/>
<keyword id="KW-1185">Reference proteome</keyword>
<keyword id="KW-0687">Ribonucleoprotein</keyword>
<keyword id="KW-0689">Ribosomal protein</keyword>
<keyword id="KW-0694">RNA-binding</keyword>
<keyword id="KW-0699">rRNA-binding</keyword>
<sequence length="108" mass="11776">MAKSRILKGDVVKVIAGSHKGQIGPITSITKDKQWVSVQGITVKKHVKPTNEDSEGGIKDIPAKLHISNVALQDPKNKDQVTKVGFEIINGKKVRIARKSKTQIKTAK</sequence>